<evidence type="ECO:0000255" key="1">
    <source>
        <dbReference type="HAMAP-Rule" id="MF_00260"/>
    </source>
</evidence>
<sequence length="292" mass="32226">MKIRVGSRESKLAVRQAQIVIDSIKKYNPDIEIELVTMKTTGDKILDKTIDKIGGKGLFVKELDRALLDGKVDITVHSFKDMPMDIDDRLPIVAVSKREDPRDVLVLPKGKNEIDFNGPIGCSSSRRKIQIEKIYPGCTVEPIRGNVLTRLEKLDKGEYSAIALAYAGLKRLGLEERIWRVFSTDEIVPAACQGIIAVQARKDFDASILANFHDKDSWDVSVAERSFIKALNGGCSSPSAAYGVIQGEKIVLTGFYVDKNGKIYKMTKTGDRNQGEALGYSLAMEMLKGADA</sequence>
<protein>
    <recommendedName>
        <fullName evidence="1">Porphobilinogen deaminase</fullName>
        <shortName evidence="1">PBG</shortName>
        <ecNumber evidence="1">2.5.1.61</ecNumber>
    </recommendedName>
    <alternativeName>
        <fullName evidence="1">Hydroxymethylbilane synthase</fullName>
        <shortName evidence="1">HMBS</shortName>
    </alternativeName>
    <alternativeName>
        <fullName evidence="1">Pre-uroporphyrinogen synthase</fullName>
    </alternativeName>
</protein>
<reference key="1">
    <citation type="submission" date="2007-02" db="EMBL/GenBank/DDBJ databases">
        <title>Complete sequence of Clostridium thermocellum ATCC 27405.</title>
        <authorList>
            <consortium name="US DOE Joint Genome Institute"/>
            <person name="Copeland A."/>
            <person name="Lucas S."/>
            <person name="Lapidus A."/>
            <person name="Barry K."/>
            <person name="Detter J.C."/>
            <person name="Glavina del Rio T."/>
            <person name="Hammon N."/>
            <person name="Israni S."/>
            <person name="Dalin E."/>
            <person name="Tice H."/>
            <person name="Pitluck S."/>
            <person name="Chertkov O."/>
            <person name="Brettin T."/>
            <person name="Bruce D."/>
            <person name="Han C."/>
            <person name="Tapia R."/>
            <person name="Gilna P."/>
            <person name="Schmutz J."/>
            <person name="Larimer F."/>
            <person name="Land M."/>
            <person name="Hauser L."/>
            <person name="Kyrpides N."/>
            <person name="Mikhailova N."/>
            <person name="Wu J.H.D."/>
            <person name="Newcomb M."/>
            <person name="Richardson P."/>
        </authorList>
    </citation>
    <scope>NUCLEOTIDE SEQUENCE [LARGE SCALE GENOMIC DNA]</scope>
    <source>
        <strain>ATCC 27405 / DSM 1237 / JCM 9322 / NBRC 103400 / NCIMB 10682 / NRRL B-4536 / VPI 7372</strain>
    </source>
</reference>
<keyword id="KW-0627">Porphyrin biosynthesis</keyword>
<keyword id="KW-1185">Reference proteome</keyword>
<keyword id="KW-0808">Transferase</keyword>
<accession>A3DIF0</accession>
<name>HEM3_ACET2</name>
<proteinExistence type="inferred from homology"/>
<dbReference type="EC" id="2.5.1.61" evidence="1"/>
<dbReference type="EMBL" id="CP000568">
    <property type="protein sequence ID" value="ABN53729.1"/>
    <property type="molecule type" value="Genomic_DNA"/>
</dbReference>
<dbReference type="RefSeq" id="WP_003513110.1">
    <property type="nucleotide sequence ID" value="NC_009012.1"/>
</dbReference>
<dbReference type="SMR" id="A3DIF0"/>
<dbReference type="STRING" id="203119.Cthe_2527"/>
<dbReference type="GeneID" id="35803626"/>
<dbReference type="KEGG" id="cth:Cthe_2527"/>
<dbReference type="eggNOG" id="COG0181">
    <property type="taxonomic scope" value="Bacteria"/>
</dbReference>
<dbReference type="HOGENOM" id="CLU_019704_1_0_9"/>
<dbReference type="OrthoDB" id="9810298at2"/>
<dbReference type="UniPathway" id="UPA00251">
    <property type="reaction ID" value="UER00319"/>
</dbReference>
<dbReference type="Proteomes" id="UP000002145">
    <property type="component" value="Chromosome"/>
</dbReference>
<dbReference type="GO" id="GO:0005737">
    <property type="term" value="C:cytoplasm"/>
    <property type="evidence" value="ECO:0007669"/>
    <property type="project" value="TreeGrafter"/>
</dbReference>
<dbReference type="GO" id="GO:0004418">
    <property type="term" value="F:hydroxymethylbilane synthase activity"/>
    <property type="evidence" value="ECO:0007669"/>
    <property type="project" value="UniProtKB-UniRule"/>
</dbReference>
<dbReference type="GO" id="GO:0006782">
    <property type="term" value="P:protoporphyrinogen IX biosynthetic process"/>
    <property type="evidence" value="ECO:0007669"/>
    <property type="project" value="UniProtKB-UniRule"/>
</dbReference>
<dbReference type="CDD" id="cd13647">
    <property type="entry name" value="PBP2_PBGD_2"/>
    <property type="match status" value="1"/>
</dbReference>
<dbReference type="FunFam" id="3.40.190.10:FF:000004">
    <property type="entry name" value="Porphobilinogen deaminase"/>
    <property type="match status" value="1"/>
</dbReference>
<dbReference type="FunFam" id="3.40.190.10:FF:000005">
    <property type="entry name" value="Porphobilinogen deaminase"/>
    <property type="match status" value="1"/>
</dbReference>
<dbReference type="Gene3D" id="3.40.190.10">
    <property type="entry name" value="Periplasmic binding protein-like II"/>
    <property type="match status" value="2"/>
</dbReference>
<dbReference type="Gene3D" id="3.30.160.40">
    <property type="entry name" value="Porphobilinogen deaminase, C-terminal domain"/>
    <property type="match status" value="1"/>
</dbReference>
<dbReference type="HAMAP" id="MF_00260">
    <property type="entry name" value="Porphobil_deam"/>
    <property type="match status" value="1"/>
</dbReference>
<dbReference type="InterPro" id="IPR000860">
    <property type="entry name" value="HemC"/>
</dbReference>
<dbReference type="InterPro" id="IPR022417">
    <property type="entry name" value="Porphobilin_deaminase_N"/>
</dbReference>
<dbReference type="InterPro" id="IPR022418">
    <property type="entry name" value="Porphobilinogen_deaminase_C"/>
</dbReference>
<dbReference type="InterPro" id="IPR036803">
    <property type="entry name" value="Porphobilinogen_deaminase_C_sf"/>
</dbReference>
<dbReference type="NCBIfam" id="TIGR00212">
    <property type="entry name" value="hemC"/>
    <property type="match status" value="1"/>
</dbReference>
<dbReference type="PANTHER" id="PTHR11557">
    <property type="entry name" value="PORPHOBILINOGEN DEAMINASE"/>
    <property type="match status" value="1"/>
</dbReference>
<dbReference type="PANTHER" id="PTHR11557:SF0">
    <property type="entry name" value="PORPHOBILINOGEN DEAMINASE"/>
    <property type="match status" value="1"/>
</dbReference>
<dbReference type="Pfam" id="PF01379">
    <property type="entry name" value="Porphobil_deam"/>
    <property type="match status" value="1"/>
</dbReference>
<dbReference type="Pfam" id="PF03900">
    <property type="entry name" value="Porphobil_deamC"/>
    <property type="match status" value="1"/>
</dbReference>
<dbReference type="PIRSF" id="PIRSF001438">
    <property type="entry name" value="4pyrrol_synth_OHMeBilane_synth"/>
    <property type="match status" value="1"/>
</dbReference>
<dbReference type="PRINTS" id="PR00151">
    <property type="entry name" value="PORPHBDMNASE"/>
</dbReference>
<dbReference type="SUPFAM" id="SSF53850">
    <property type="entry name" value="Periplasmic binding protein-like II"/>
    <property type="match status" value="1"/>
</dbReference>
<dbReference type="SUPFAM" id="SSF54782">
    <property type="entry name" value="Porphobilinogen deaminase (hydroxymethylbilane synthase), C-terminal domain"/>
    <property type="match status" value="1"/>
</dbReference>
<feature type="chain" id="PRO_1000059095" description="Porphobilinogen deaminase">
    <location>
        <begin position="1"/>
        <end position="292"/>
    </location>
</feature>
<feature type="modified residue" description="S-(dipyrrolylmethanemethyl)cysteine" evidence="1">
    <location>
        <position position="235"/>
    </location>
</feature>
<comment type="function">
    <text evidence="1">Tetrapolymerization of the monopyrrole PBG into the hydroxymethylbilane pre-uroporphyrinogen in several discrete steps.</text>
</comment>
<comment type="catalytic activity">
    <reaction evidence="1">
        <text>4 porphobilinogen + H2O = hydroxymethylbilane + 4 NH4(+)</text>
        <dbReference type="Rhea" id="RHEA:13185"/>
        <dbReference type="ChEBI" id="CHEBI:15377"/>
        <dbReference type="ChEBI" id="CHEBI:28938"/>
        <dbReference type="ChEBI" id="CHEBI:57845"/>
        <dbReference type="ChEBI" id="CHEBI:58126"/>
        <dbReference type="EC" id="2.5.1.61"/>
    </reaction>
</comment>
<comment type="cofactor">
    <cofactor evidence="1">
        <name>dipyrromethane</name>
        <dbReference type="ChEBI" id="CHEBI:60342"/>
    </cofactor>
    <text evidence="1">Binds 1 dipyrromethane group covalently.</text>
</comment>
<comment type="pathway">
    <text evidence="1">Porphyrin-containing compound metabolism; protoporphyrin-IX biosynthesis; coproporphyrinogen-III from 5-aminolevulinate: step 2/4.</text>
</comment>
<comment type="subunit">
    <text evidence="1">Monomer.</text>
</comment>
<comment type="miscellaneous">
    <text evidence="1">The porphobilinogen subunits are added to the dipyrromethane group.</text>
</comment>
<comment type="similarity">
    <text evidence="1">Belongs to the HMBS family.</text>
</comment>
<gene>
    <name evidence="1" type="primary">hemC</name>
    <name type="ordered locus">Cthe_2527</name>
</gene>
<organism>
    <name type="scientific">Acetivibrio thermocellus (strain ATCC 27405 / DSM 1237 / JCM 9322 / NBRC 103400 / NCIMB 10682 / NRRL B-4536 / VPI 7372)</name>
    <name type="common">Clostridium thermocellum</name>
    <dbReference type="NCBI Taxonomy" id="203119"/>
    <lineage>
        <taxon>Bacteria</taxon>
        <taxon>Bacillati</taxon>
        <taxon>Bacillota</taxon>
        <taxon>Clostridia</taxon>
        <taxon>Eubacteriales</taxon>
        <taxon>Oscillospiraceae</taxon>
        <taxon>Acetivibrio</taxon>
    </lineage>
</organism>